<proteinExistence type="inferred from homology"/>
<organism>
    <name type="scientific">Chloroflexus aurantiacus (strain ATCC 29364 / DSM 637 / Y-400-fl)</name>
    <dbReference type="NCBI Taxonomy" id="480224"/>
    <lineage>
        <taxon>Bacteria</taxon>
        <taxon>Bacillati</taxon>
        <taxon>Chloroflexota</taxon>
        <taxon>Chloroflexia</taxon>
        <taxon>Chloroflexales</taxon>
        <taxon>Chloroflexineae</taxon>
        <taxon>Chloroflexaceae</taxon>
        <taxon>Chloroflexus</taxon>
    </lineage>
</organism>
<comment type="function">
    <text evidence="1">RNaseP catalyzes the removal of the 5'-leader sequence from pre-tRNA to produce the mature 5'-terminus. It can also cleave other RNA substrates such as 4.5S RNA. The protein component plays an auxiliary but essential role in vivo by binding to the 5'-leader sequence and broadening the substrate specificity of the ribozyme.</text>
</comment>
<comment type="catalytic activity">
    <reaction evidence="1">
        <text>Endonucleolytic cleavage of RNA, removing 5'-extranucleotides from tRNA precursor.</text>
        <dbReference type="EC" id="3.1.26.5"/>
    </reaction>
</comment>
<comment type="subunit">
    <text evidence="1">Consists of a catalytic RNA component (M1 or rnpB) and a protein subunit.</text>
</comment>
<comment type="similarity">
    <text evidence="1">Belongs to the RnpA family.</text>
</comment>
<protein>
    <recommendedName>
        <fullName evidence="1">Ribonuclease P protein component</fullName>
        <shortName evidence="1">RNase P protein</shortName>
        <shortName evidence="1">RNaseP protein</shortName>
        <ecNumber evidence="1">3.1.26.5</ecNumber>
    </recommendedName>
    <alternativeName>
        <fullName evidence="1">Protein C5</fullName>
    </alternativeName>
</protein>
<accession>B9LGI0</accession>
<feature type="chain" id="PRO_1000194622" description="Ribonuclease P protein component">
    <location>
        <begin position="1"/>
        <end position="135"/>
    </location>
</feature>
<feature type="region of interest" description="Disordered" evidence="2">
    <location>
        <begin position="115"/>
        <end position="135"/>
    </location>
</feature>
<keyword id="KW-0255">Endonuclease</keyword>
<keyword id="KW-0378">Hydrolase</keyword>
<keyword id="KW-0540">Nuclease</keyword>
<keyword id="KW-0694">RNA-binding</keyword>
<keyword id="KW-0819">tRNA processing</keyword>
<evidence type="ECO:0000255" key="1">
    <source>
        <dbReference type="HAMAP-Rule" id="MF_00227"/>
    </source>
</evidence>
<evidence type="ECO:0000256" key="2">
    <source>
        <dbReference type="SAM" id="MobiDB-lite"/>
    </source>
</evidence>
<dbReference type="EC" id="3.1.26.5" evidence="1"/>
<dbReference type="EMBL" id="CP001364">
    <property type="protein sequence ID" value="ACM51569.1"/>
    <property type="molecule type" value="Genomic_DNA"/>
</dbReference>
<dbReference type="SMR" id="B9LGI0"/>
<dbReference type="KEGG" id="chl:Chy400_0127"/>
<dbReference type="HOGENOM" id="CLU_117179_9_4_0"/>
<dbReference type="OrthoDB" id="166028at2"/>
<dbReference type="GO" id="GO:0030677">
    <property type="term" value="C:ribonuclease P complex"/>
    <property type="evidence" value="ECO:0007669"/>
    <property type="project" value="TreeGrafter"/>
</dbReference>
<dbReference type="GO" id="GO:0042781">
    <property type="term" value="F:3'-tRNA processing endoribonuclease activity"/>
    <property type="evidence" value="ECO:0007669"/>
    <property type="project" value="TreeGrafter"/>
</dbReference>
<dbReference type="GO" id="GO:0004526">
    <property type="term" value="F:ribonuclease P activity"/>
    <property type="evidence" value="ECO:0007669"/>
    <property type="project" value="UniProtKB-UniRule"/>
</dbReference>
<dbReference type="GO" id="GO:0000049">
    <property type="term" value="F:tRNA binding"/>
    <property type="evidence" value="ECO:0007669"/>
    <property type="project" value="UniProtKB-UniRule"/>
</dbReference>
<dbReference type="GO" id="GO:0001682">
    <property type="term" value="P:tRNA 5'-leader removal"/>
    <property type="evidence" value="ECO:0007669"/>
    <property type="project" value="UniProtKB-UniRule"/>
</dbReference>
<dbReference type="Gene3D" id="3.30.230.10">
    <property type="match status" value="1"/>
</dbReference>
<dbReference type="HAMAP" id="MF_00227">
    <property type="entry name" value="RNase_P"/>
    <property type="match status" value="1"/>
</dbReference>
<dbReference type="InterPro" id="IPR020568">
    <property type="entry name" value="Ribosomal_Su5_D2-typ_SF"/>
</dbReference>
<dbReference type="InterPro" id="IPR014721">
    <property type="entry name" value="Ribsml_uS5_D2-typ_fold_subgr"/>
</dbReference>
<dbReference type="InterPro" id="IPR000100">
    <property type="entry name" value="RNase_P"/>
</dbReference>
<dbReference type="InterPro" id="IPR020539">
    <property type="entry name" value="RNase_P_CS"/>
</dbReference>
<dbReference type="NCBIfam" id="TIGR00188">
    <property type="entry name" value="rnpA"/>
    <property type="match status" value="1"/>
</dbReference>
<dbReference type="PANTHER" id="PTHR33992">
    <property type="entry name" value="RIBONUCLEASE P PROTEIN COMPONENT"/>
    <property type="match status" value="1"/>
</dbReference>
<dbReference type="PANTHER" id="PTHR33992:SF1">
    <property type="entry name" value="RIBONUCLEASE P PROTEIN COMPONENT"/>
    <property type="match status" value="1"/>
</dbReference>
<dbReference type="Pfam" id="PF00825">
    <property type="entry name" value="Ribonuclease_P"/>
    <property type="match status" value="1"/>
</dbReference>
<dbReference type="SUPFAM" id="SSF54211">
    <property type="entry name" value="Ribosomal protein S5 domain 2-like"/>
    <property type="match status" value="1"/>
</dbReference>
<dbReference type="PROSITE" id="PS00648">
    <property type="entry name" value="RIBONUCLEASE_P"/>
    <property type="match status" value="1"/>
</dbReference>
<reference key="1">
    <citation type="submission" date="2009-01" db="EMBL/GenBank/DDBJ databases">
        <title>Complete sequence of Chloroflexus sp. Y-400-fl.</title>
        <authorList>
            <consortium name="US DOE Joint Genome Institute"/>
            <person name="Lucas S."/>
            <person name="Copeland A."/>
            <person name="Lapidus A."/>
            <person name="Glavina del Rio T."/>
            <person name="Dalin E."/>
            <person name="Tice H."/>
            <person name="Bruce D."/>
            <person name="Goodwin L."/>
            <person name="Pitluck S."/>
            <person name="Sims D."/>
            <person name="Kiss H."/>
            <person name="Brettin T."/>
            <person name="Detter J.C."/>
            <person name="Han C."/>
            <person name="Larimer F."/>
            <person name="Land M."/>
            <person name="Hauser L."/>
            <person name="Kyrpides N."/>
            <person name="Ovchinnikova G."/>
            <person name="Bryant D.A."/>
            <person name="Richardson P."/>
        </authorList>
    </citation>
    <scope>NUCLEOTIDE SEQUENCE [LARGE SCALE GENOMIC DNA]</scope>
    <source>
        <strain>ATCC 29364 / DSM 637 / Y-400-fl</strain>
    </source>
</reference>
<gene>
    <name evidence="1" type="primary">rnpA</name>
    <name type="ordered locus">Chy400_0127</name>
</gene>
<name>RNPA_CHLSY</name>
<sequence length="135" mass="15604">MRRAYRLRRPEQFRRVRQEGRTFTSPWLILTVAPARRRTLRCGFVVSRRVGGAVQRNRARRRVREAVRLLLPRLTAGYDMVFTIRTPEVIDAPFTQLQDDITALLRQACLLPAPTNETVSPVSDTPLPQHERGSQ</sequence>